<protein>
    <recommendedName>
        <fullName evidence="1">Small ribosomal subunit protein uS19</fullName>
    </recommendedName>
    <alternativeName>
        <fullName evidence="2">30S ribosomal protein S19</fullName>
    </alternativeName>
</protein>
<evidence type="ECO:0000255" key="1">
    <source>
        <dbReference type="HAMAP-Rule" id="MF_00531"/>
    </source>
</evidence>
<evidence type="ECO:0000305" key="2"/>
<proteinExistence type="inferred from homology"/>
<gene>
    <name evidence="1" type="primary">rpsS</name>
    <name type="ordered locus">WRi_005150</name>
</gene>
<reference key="1">
    <citation type="journal article" date="2009" name="Proc. Natl. Acad. Sci. U.S.A.">
        <title>The mosaic genome structure of the Wolbachia wRi strain infecting Drosophila simulans.</title>
        <authorList>
            <person name="Klasson L."/>
            <person name="Westberg J."/>
            <person name="Sapountzis P."/>
            <person name="Naeslund K."/>
            <person name="Lutnaes Y."/>
            <person name="Darby A.C."/>
            <person name="Veneti Z."/>
            <person name="Chen L."/>
            <person name="Braig H.R."/>
            <person name="Garrett R."/>
            <person name="Bourtzis K."/>
            <person name="Andersson S.G."/>
        </authorList>
    </citation>
    <scope>NUCLEOTIDE SEQUENCE [LARGE SCALE GENOMIC DNA]</scope>
    <source>
        <strain>wRi</strain>
    </source>
</reference>
<name>RS19_WOLWR</name>
<sequence length="94" mass="10488">MSRSAWKPPFCHPSILKSVNNALNKGFVNMAIKVHSRASVILPNCLGLKFAVYNGKDYIPVNVNDQNMIGHKFGEFSPTRKFTGHSGDKKATRR</sequence>
<keyword id="KW-0687">Ribonucleoprotein</keyword>
<keyword id="KW-0689">Ribosomal protein</keyword>
<keyword id="KW-0694">RNA-binding</keyword>
<keyword id="KW-0699">rRNA-binding</keyword>
<dbReference type="EMBL" id="CP001391">
    <property type="protein sequence ID" value="ACN95297.1"/>
    <property type="molecule type" value="Genomic_DNA"/>
</dbReference>
<dbReference type="RefSeq" id="WP_006279181.1">
    <property type="nucleotide sequence ID" value="NZ_MKIF01000201.1"/>
</dbReference>
<dbReference type="SMR" id="C0R305"/>
<dbReference type="STRING" id="66084.WRi_005150"/>
<dbReference type="GeneID" id="70036160"/>
<dbReference type="KEGG" id="wri:WRi_005150"/>
<dbReference type="HOGENOM" id="CLU_144911_0_1_5"/>
<dbReference type="Proteomes" id="UP000001293">
    <property type="component" value="Chromosome"/>
</dbReference>
<dbReference type="GO" id="GO:0005737">
    <property type="term" value="C:cytoplasm"/>
    <property type="evidence" value="ECO:0007669"/>
    <property type="project" value="UniProtKB-ARBA"/>
</dbReference>
<dbReference type="GO" id="GO:0015935">
    <property type="term" value="C:small ribosomal subunit"/>
    <property type="evidence" value="ECO:0007669"/>
    <property type="project" value="InterPro"/>
</dbReference>
<dbReference type="GO" id="GO:0019843">
    <property type="term" value="F:rRNA binding"/>
    <property type="evidence" value="ECO:0007669"/>
    <property type="project" value="UniProtKB-UniRule"/>
</dbReference>
<dbReference type="GO" id="GO:0003735">
    <property type="term" value="F:structural constituent of ribosome"/>
    <property type="evidence" value="ECO:0007669"/>
    <property type="project" value="InterPro"/>
</dbReference>
<dbReference type="GO" id="GO:0000028">
    <property type="term" value="P:ribosomal small subunit assembly"/>
    <property type="evidence" value="ECO:0007669"/>
    <property type="project" value="TreeGrafter"/>
</dbReference>
<dbReference type="GO" id="GO:0006412">
    <property type="term" value="P:translation"/>
    <property type="evidence" value="ECO:0007669"/>
    <property type="project" value="UniProtKB-UniRule"/>
</dbReference>
<dbReference type="FunFam" id="3.30.860.10:FF:000001">
    <property type="entry name" value="30S ribosomal protein S19"/>
    <property type="match status" value="1"/>
</dbReference>
<dbReference type="Gene3D" id="3.30.860.10">
    <property type="entry name" value="30s Ribosomal Protein S19, Chain A"/>
    <property type="match status" value="1"/>
</dbReference>
<dbReference type="HAMAP" id="MF_00531">
    <property type="entry name" value="Ribosomal_uS19"/>
    <property type="match status" value="1"/>
</dbReference>
<dbReference type="InterPro" id="IPR002222">
    <property type="entry name" value="Ribosomal_uS19"/>
</dbReference>
<dbReference type="InterPro" id="IPR005732">
    <property type="entry name" value="Ribosomal_uS19_bac-type"/>
</dbReference>
<dbReference type="InterPro" id="IPR023575">
    <property type="entry name" value="Ribosomal_uS19_SF"/>
</dbReference>
<dbReference type="NCBIfam" id="TIGR01050">
    <property type="entry name" value="rpsS_bact"/>
    <property type="match status" value="1"/>
</dbReference>
<dbReference type="PANTHER" id="PTHR11880">
    <property type="entry name" value="RIBOSOMAL PROTEIN S19P FAMILY MEMBER"/>
    <property type="match status" value="1"/>
</dbReference>
<dbReference type="PANTHER" id="PTHR11880:SF8">
    <property type="entry name" value="SMALL RIBOSOMAL SUBUNIT PROTEIN US19M"/>
    <property type="match status" value="1"/>
</dbReference>
<dbReference type="Pfam" id="PF00203">
    <property type="entry name" value="Ribosomal_S19"/>
    <property type="match status" value="1"/>
</dbReference>
<dbReference type="PIRSF" id="PIRSF002144">
    <property type="entry name" value="Ribosomal_S19"/>
    <property type="match status" value="1"/>
</dbReference>
<dbReference type="PRINTS" id="PR00975">
    <property type="entry name" value="RIBOSOMALS19"/>
</dbReference>
<dbReference type="SUPFAM" id="SSF54570">
    <property type="entry name" value="Ribosomal protein S19"/>
    <property type="match status" value="1"/>
</dbReference>
<feature type="chain" id="PRO_1000146425" description="Small ribosomal subunit protein uS19">
    <location>
        <begin position="1"/>
        <end position="94"/>
    </location>
</feature>
<comment type="function">
    <text evidence="1">Protein S19 forms a complex with S13 that binds strongly to the 16S ribosomal RNA.</text>
</comment>
<comment type="similarity">
    <text evidence="1">Belongs to the universal ribosomal protein uS19 family.</text>
</comment>
<accession>C0R305</accession>
<organism>
    <name type="scientific">Wolbachia sp. subsp. Drosophila simulans (strain wRi)</name>
    <dbReference type="NCBI Taxonomy" id="66084"/>
    <lineage>
        <taxon>Bacteria</taxon>
        <taxon>Pseudomonadati</taxon>
        <taxon>Pseudomonadota</taxon>
        <taxon>Alphaproteobacteria</taxon>
        <taxon>Rickettsiales</taxon>
        <taxon>Anaplasmataceae</taxon>
        <taxon>Wolbachieae</taxon>
        <taxon>Wolbachia</taxon>
    </lineage>
</organism>